<organism>
    <name type="scientific">Streptococcus pneumoniae (strain CGSP14)</name>
    <dbReference type="NCBI Taxonomy" id="516950"/>
    <lineage>
        <taxon>Bacteria</taxon>
        <taxon>Bacillati</taxon>
        <taxon>Bacillota</taxon>
        <taxon>Bacilli</taxon>
        <taxon>Lactobacillales</taxon>
        <taxon>Streptococcaceae</taxon>
        <taxon>Streptococcus</taxon>
    </lineage>
</organism>
<sequence>MSKEIKFSSDARSAMVRGVDILADTVKVTLGPKGRNVVLEKSFGSPLITNDGVTIAKEIELEDHFENMGAKLVSEVASKTNDIAGDGTTTATVLTQAIVREGIKNVTAGANPIGIRRGIETAVAAAVEALKNNAIPVANKEAIAQVAAVSSRSEKVGEYISEAMEKVGKDGVITIEESRGMETELEVVEGMQFDRGYLSQYMVTDSEKMVADLENPYILITDKKISNIQEILPLLESILQSNRPLLIIADDVDGEALPTLVLNKIRGTFNVVAVKAPGFGDRRKAMLEDIAILTGGTVITEDLGLELKDATIEALGQAARVTVDKDSTVIVEGAGNPEAISNRVAVIKSQIETTTSEFDREKLQERLAKLSGGVAVIKVGAATETELKEMKLRIEDALNATRAAVEEGIVAGGGTALANVIPAVATLELTGDEATGRNIVLRALEEPVRQIAHNAGFEGSIVIDRLKNAELGIGFNAATGEWVNMIDQGIIDPVKVSRSALQNAASVASLILTTEAVVANKPEPVAPAPAMDPSMMGGMM</sequence>
<accession>B2ILZ5</accession>
<gene>
    <name evidence="1" type="primary">groEL</name>
    <name evidence="1" type="synonym">groL</name>
    <name type="ordered locus">SPCG_1881</name>
</gene>
<protein>
    <recommendedName>
        <fullName evidence="1">Chaperonin GroEL</fullName>
        <ecNumber evidence="1">5.6.1.7</ecNumber>
    </recommendedName>
    <alternativeName>
        <fullName evidence="1">60 kDa chaperonin</fullName>
    </alternativeName>
    <alternativeName>
        <fullName evidence="1">Chaperonin-60</fullName>
        <shortName evidence="1">Cpn60</shortName>
    </alternativeName>
</protein>
<evidence type="ECO:0000255" key="1">
    <source>
        <dbReference type="HAMAP-Rule" id="MF_00600"/>
    </source>
</evidence>
<feature type="chain" id="PRO_1000130066" description="Chaperonin GroEL">
    <location>
        <begin position="1"/>
        <end position="540"/>
    </location>
</feature>
<feature type="binding site" evidence="1">
    <location>
        <begin position="29"/>
        <end position="32"/>
    </location>
    <ligand>
        <name>ATP</name>
        <dbReference type="ChEBI" id="CHEBI:30616"/>
    </ligand>
</feature>
<feature type="binding site" evidence="1">
    <location>
        <begin position="86"/>
        <end position="90"/>
    </location>
    <ligand>
        <name>ATP</name>
        <dbReference type="ChEBI" id="CHEBI:30616"/>
    </ligand>
</feature>
<feature type="binding site" evidence="1">
    <location>
        <position position="413"/>
    </location>
    <ligand>
        <name>ATP</name>
        <dbReference type="ChEBI" id="CHEBI:30616"/>
    </ligand>
</feature>
<feature type="binding site" evidence="1">
    <location>
        <begin position="476"/>
        <end position="478"/>
    </location>
    <ligand>
        <name>ATP</name>
        <dbReference type="ChEBI" id="CHEBI:30616"/>
    </ligand>
</feature>
<feature type="binding site" evidence="1">
    <location>
        <position position="492"/>
    </location>
    <ligand>
        <name>ATP</name>
        <dbReference type="ChEBI" id="CHEBI:30616"/>
    </ligand>
</feature>
<comment type="function">
    <text evidence="1">Together with its co-chaperonin GroES, plays an essential role in assisting protein folding. The GroEL-GroES system forms a nano-cage that allows encapsulation of the non-native substrate proteins and provides a physical environment optimized to promote and accelerate protein folding.</text>
</comment>
<comment type="catalytic activity">
    <reaction evidence="1">
        <text>ATP + H2O + a folded polypeptide = ADP + phosphate + an unfolded polypeptide.</text>
        <dbReference type="EC" id="5.6.1.7"/>
    </reaction>
</comment>
<comment type="subunit">
    <text evidence="1">Forms a cylinder of 14 subunits composed of two heptameric rings stacked back-to-back. Interacts with the co-chaperonin GroES.</text>
</comment>
<comment type="subcellular location">
    <subcellularLocation>
        <location evidence="1">Cytoplasm</location>
    </subcellularLocation>
</comment>
<comment type="similarity">
    <text evidence="1">Belongs to the chaperonin (HSP60) family.</text>
</comment>
<dbReference type="EC" id="5.6.1.7" evidence="1"/>
<dbReference type="EMBL" id="CP001033">
    <property type="protein sequence ID" value="ACB91133.1"/>
    <property type="molecule type" value="Genomic_DNA"/>
</dbReference>
<dbReference type="RefSeq" id="WP_000031585.1">
    <property type="nucleotide sequence ID" value="NC_010582.1"/>
</dbReference>
<dbReference type="SMR" id="B2ILZ5"/>
<dbReference type="KEGG" id="spw:SPCG_1881"/>
<dbReference type="HOGENOM" id="CLU_016503_3_0_9"/>
<dbReference type="GO" id="GO:0005737">
    <property type="term" value="C:cytoplasm"/>
    <property type="evidence" value="ECO:0007669"/>
    <property type="project" value="UniProtKB-SubCell"/>
</dbReference>
<dbReference type="GO" id="GO:0005524">
    <property type="term" value="F:ATP binding"/>
    <property type="evidence" value="ECO:0007669"/>
    <property type="project" value="UniProtKB-UniRule"/>
</dbReference>
<dbReference type="GO" id="GO:0140662">
    <property type="term" value="F:ATP-dependent protein folding chaperone"/>
    <property type="evidence" value="ECO:0007669"/>
    <property type="project" value="InterPro"/>
</dbReference>
<dbReference type="GO" id="GO:0016853">
    <property type="term" value="F:isomerase activity"/>
    <property type="evidence" value="ECO:0007669"/>
    <property type="project" value="UniProtKB-KW"/>
</dbReference>
<dbReference type="GO" id="GO:0051082">
    <property type="term" value="F:unfolded protein binding"/>
    <property type="evidence" value="ECO:0007669"/>
    <property type="project" value="UniProtKB-UniRule"/>
</dbReference>
<dbReference type="GO" id="GO:0042026">
    <property type="term" value="P:protein refolding"/>
    <property type="evidence" value="ECO:0007669"/>
    <property type="project" value="UniProtKB-UniRule"/>
</dbReference>
<dbReference type="CDD" id="cd03344">
    <property type="entry name" value="GroEL"/>
    <property type="match status" value="1"/>
</dbReference>
<dbReference type="FunFam" id="1.10.560.10:FF:000001">
    <property type="entry name" value="60 kDa chaperonin"/>
    <property type="match status" value="1"/>
</dbReference>
<dbReference type="FunFam" id="3.50.7.10:FF:000001">
    <property type="entry name" value="60 kDa chaperonin"/>
    <property type="match status" value="1"/>
</dbReference>
<dbReference type="Gene3D" id="3.50.7.10">
    <property type="entry name" value="GroEL"/>
    <property type="match status" value="1"/>
</dbReference>
<dbReference type="Gene3D" id="1.10.560.10">
    <property type="entry name" value="GroEL-like equatorial domain"/>
    <property type="match status" value="1"/>
</dbReference>
<dbReference type="Gene3D" id="3.30.260.10">
    <property type="entry name" value="TCP-1-like chaperonin intermediate domain"/>
    <property type="match status" value="1"/>
</dbReference>
<dbReference type="HAMAP" id="MF_00600">
    <property type="entry name" value="CH60"/>
    <property type="match status" value="1"/>
</dbReference>
<dbReference type="InterPro" id="IPR018370">
    <property type="entry name" value="Chaperonin_Cpn60_CS"/>
</dbReference>
<dbReference type="InterPro" id="IPR001844">
    <property type="entry name" value="Cpn60/GroEL"/>
</dbReference>
<dbReference type="InterPro" id="IPR002423">
    <property type="entry name" value="Cpn60/GroEL/TCP-1"/>
</dbReference>
<dbReference type="InterPro" id="IPR027409">
    <property type="entry name" value="GroEL-like_apical_dom_sf"/>
</dbReference>
<dbReference type="InterPro" id="IPR027413">
    <property type="entry name" value="GROEL-like_equatorial_sf"/>
</dbReference>
<dbReference type="InterPro" id="IPR027410">
    <property type="entry name" value="TCP-1-like_intermed_sf"/>
</dbReference>
<dbReference type="NCBIfam" id="TIGR02348">
    <property type="entry name" value="GroEL"/>
    <property type="match status" value="1"/>
</dbReference>
<dbReference type="NCBIfam" id="NF000592">
    <property type="entry name" value="PRK00013.1"/>
    <property type="match status" value="1"/>
</dbReference>
<dbReference type="NCBIfam" id="NF009487">
    <property type="entry name" value="PRK12849.1"/>
    <property type="match status" value="1"/>
</dbReference>
<dbReference type="NCBIfam" id="NF009488">
    <property type="entry name" value="PRK12850.1"/>
    <property type="match status" value="1"/>
</dbReference>
<dbReference type="NCBIfam" id="NF009489">
    <property type="entry name" value="PRK12851.1"/>
    <property type="match status" value="1"/>
</dbReference>
<dbReference type="PANTHER" id="PTHR45633">
    <property type="entry name" value="60 KDA HEAT SHOCK PROTEIN, MITOCHONDRIAL"/>
    <property type="match status" value="1"/>
</dbReference>
<dbReference type="Pfam" id="PF00118">
    <property type="entry name" value="Cpn60_TCP1"/>
    <property type="match status" value="1"/>
</dbReference>
<dbReference type="PRINTS" id="PR00298">
    <property type="entry name" value="CHAPERONIN60"/>
</dbReference>
<dbReference type="SUPFAM" id="SSF52029">
    <property type="entry name" value="GroEL apical domain-like"/>
    <property type="match status" value="1"/>
</dbReference>
<dbReference type="SUPFAM" id="SSF48592">
    <property type="entry name" value="GroEL equatorial domain-like"/>
    <property type="match status" value="1"/>
</dbReference>
<dbReference type="SUPFAM" id="SSF54849">
    <property type="entry name" value="GroEL-intermediate domain like"/>
    <property type="match status" value="1"/>
</dbReference>
<dbReference type="PROSITE" id="PS00296">
    <property type="entry name" value="CHAPERONINS_CPN60"/>
    <property type="match status" value="1"/>
</dbReference>
<name>CH60_STRPS</name>
<reference key="1">
    <citation type="journal article" date="2009" name="BMC Genomics">
        <title>Genome evolution driven by host adaptations results in a more virulent and antimicrobial-resistant Streptococcus pneumoniae serotype 14.</title>
        <authorList>
            <person name="Ding F."/>
            <person name="Tang P."/>
            <person name="Hsu M.-H."/>
            <person name="Cui P."/>
            <person name="Hu S."/>
            <person name="Yu J."/>
            <person name="Chiu C.-H."/>
        </authorList>
    </citation>
    <scope>NUCLEOTIDE SEQUENCE [LARGE SCALE GENOMIC DNA]</scope>
    <source>
        <strain>CGSP14</strain>
    </source>
</reference>
<proteinExistence type="inferred from homology"/>
<keyword id="KW-0067">ATP-binding</keyword>
<keyword id="KW-0143">Chaperone</keyword>
<keyword id="KW-0963">Cytoplasm</keyword>
<keyword id="KW-0413">Isomerase</keyword>
<keyword id="KW-0547">Nucleotide-binding</keyword>